<proteinExistence type="inferred from homology"/>
<keyword id="KW-0408">Iron</keyword>
<keyword id="KW-0479">Metal-binding</keyword>
<feature type="chain" id="PRO_1000096253" description="Iron-sulfur cluster assembly protein CyaY">
    <location>
        <begin position="1"/>
        <end position="106"/>
    </location>
</feature>
<name>CYAY_SALEP</name>
<comment type="function">
    <text evidence="1">Involved in iron-sulfur (Fe-S) cluster assembly. May act as a regulator of Fe-S biogenesis.</text>
</comment>
<comment type="similarity">
    <text evidence="1">Belongs to the frataxin family.</text>
</comment>
<protein>
    <recommendedName>
        <fullName evidence="1">Iron-sulfur cluster assembly protein CyaY</fullName>
    </recommendedName>
</protein>
<sequence>MNDSEFHRLADALWLTIEERLDNWDGDSDIDCEINGGVLTLSFENGSKIIINRQEPLHQVWLATKQGGYHFDLKGDEWVCDRSGETFWDLLEQAATQQAGEKVSFR</sequence>
<evidence type="ECO:0000255" key="1">
    <source>
        <dbReference type="HAMAP-Rule" id="MF_00142"/>
    </source>
</evidence>
<gene>
    <name evidence="1" type="primary">cyaY</name>
    <name type="ordered locus">SEN3741</name>
</gene>
<organism>
    <name type="scientific">Salmonella enteritidis PT4 (strain P125109)</name>
    <dbReference type="NCBI Taxonomy" id="550537"/>
    <lineage>
        <taxon>Bacteria</taxon>
        <taxon>Pseudomonadati</taxon>
        <taxon>Pseudomonadota</taxon>
        <taxon>Gammaproteobacteria</taxon>
        <taxon>Enterobacterales</taxon>
        <taxon>Enterobacteriaceae</taxon>
        <taxon>Salmonella</taxon>
    </lineage>
</organism>
<reference key="1">
    <citation type="journal article" date="2008" name="Genome Res.">
        <title>Comparative genome analysis of Salmonella enteritidis PT4 and Salmonella gallinarum 287/91 provides insights into evolutionary and host adaptation pathways.</title>
        <authorList>
            <person name="Thomson N.R."/>
            <person name="Clayton D.J."/>
            <person name="Windhorst D."/>
            <person name="Vernikos G."/>
            <person name="Davidson S."/>
            <person name="Churcher C."/>
            <person name="Quail M.A."/>
            <person name="Stevens M."/>
            <person name="Jones M.A."/>
            <person name="Watson M."/>
            <person name="Barron A."/>
            <person name="Layton A."/>
            <person name="Pickard D."/>
            <person name="Kingsley R.A."/>
            <person name="Bignell A."/>
            <person name="Clark L."/>
            <person name="Harris B."/>
            <person name="Ormond D."/>
            <person name="Abdellah Z."/>
            <person name="Brooks K."/>
            <person name="Cherevach I."/>
            <person name="Chillingworth T."/>
            <person name="Woodward J."/>
            <person name="Norberczak H."/>
            <person name="Lord A."/>
            <person name="Arrowsmith C."/>
            <person name="Jagels K."/>
            <person name="Moule S."/>
            <person name="Mungall K."/>
            <person name="Saunders M."/>
            <person name="Whitehead S."/>
            <person name="Chabalgoity J.A."/>
            <person name="Maskell D."/>
            <person name="Humphreys T."/>
            <person name="Roberts M."/>
            <person name="Barrow P.A."/>
            <person name="Dougan G."/>
            <person name="Parkhill J."/>
        </authorList>
    </citation>
    <scope>NUCLEOTIDE SEQUENCE [LARGE SCALE GENOMIC DNA]</scope>
    <source>
        <strain>P125109</strain>
    </source>
</reference>
<dbReference type="EMBL" id="AM933172">
    <property type="protein sequence ID" value="CAR35316.1"/>
    <property type="molecule type" value="Genomic_DNA"/>
</dbReference>
<dbReference type="RefSeq" id="WP_000999925.1">
    <property type="nucleotide sequence ID" value="NC_011294.1"/>
</dbReference>
<dbReference type="SMR" id="B5QVJ3"/>
<dbReference type="KEGG" id="set:SEN3741"/>
<dbReference type="HOGENOM" id="CLU_080880_3_0_6"/>
<dbReference type="Proteomes" id="UP000000613">
    <property type="component" value="Chromosome"/>
</dbReference>
<dbReference type="GO" id="GO:0005829">
    <property type="term" value="C:cytosol"/>
    <property type="evidence" value="ECO:0007669"/>
    <property type="project" value="TreeGrafter"/>
</dbReference>
<dbReference type="GO" id="GO:0008199">
    <property type="term" value="F:ferric iron binding"/>
    <property type="evidence" value="ECO:0007669"/>
    <property type="project" value="InterPro"/>
</dbReference>
<dbReference type="GO" id="GO:0008198">
    <property type="term" value="F:ferrous iron binding"/>
    <property type="evidence" value="ECO:0007669"/>
    <property type="project" value="TreeGrafter"/>
</dbReference>
<dbReference type="GO" id="GO:0016226">
    <property type="term" value="P:iron-sulfur cluster assembly"/>
    <property type="evidence" value="ECO:0007669"/>
    <property type="project" value="UniProtKB-UniRule"/>
</dbReference>
<dbReference type="CDD" id="cd00503">
    <property type="entry name" value="Frataxin"/>
    <property type="match status" value="1"/>
</dbReference>
<dbReference type="FunFam" id="3.30.920.10:FF:000001">
    <property type="entry name" value="Iron-sulfur cluster assembly protein CyaY"/>
    <property type="match status" value="1"/>
</dbReference>
<dbReference type="Gene3D" id="3.30.920.10">
    <property type="entry name" value="Frataxin/CyaY"/>
    <property type="match status" value="1"/>
</dbReference>
<dbReference type="HAMAP" id="MF_00142">
    <property type="entry name" value="CyaY"/>
    <property type="match status" value="1"/>
</dbReference>
<dbReference type="InterPro" id="IPR047584">
    <property type="entry name" value="CyaY"/>
</dbReference>
<dbReference type="InterPro" id="IPR002908">
    <property type="entry name" value="Frataxin/CyaY"/>
</dbReference>
<dbReference type="InterPro" id="IPR036524">
    <property type="entry name" value="Frataxin/CyaY_sf"/>
</dbReference>
<dbReference type="InterPro" id="IPR020895">
    <property type="entry name" value="Frataxin_CS"/>
</dbReference>
<dbReference type="NCBIfam" id="TIGR03421">
    <property type="entry name" value="FeS_CyaY"/>
    <property type="match status" value="1"/>
</dbReference>
<dbReference type="PANTHER" id="PTHR16821">
    <property type="entry name" value="FRATAXIN"/>
    <property type="match status" value="1"/>
</dbReference>
<dbReference type="PANTHER" id="PTHR16821:SF2">
    <property type="entry name" value="FRATAXIN, MITOCHONDRIAL"/>
    <property type="match status" value="1"/>
</dbReference>
<dbReference type="Pfam" id="PF01491">
    <property type="entry name" value="Frataxin_Cyay"/>
    <property type="match status" value="1"/>
</dbReference>
<dbReference type="SMART" id="SM01219">
    <property type="entry name" value="Frataxin_Cyay"/>
    <property type="match status" value="1"/>
</dbReference>
<dbReference type="SUPFAM" id="SSF55387">
    <property type="entry name" value="Frataxin/Nqo15-like"/>
    <property type="match status" value="1"/>
</dbReference>
<dbReference type="PROSITE" id="PS01344">
    <property type="entry name" value="FRATAXIN_1"/>
    <property type="match status" value="1"/>
</dbReference>
<dbReference type="PROSITE" id="PS50810">
    <property type="entry name" value="FRATAXIN_2"/>
    <property type="match status" value="1"/>
</dbReference>
<accession>B5QVJ3</accession>